<evidence type="ECO:0000255" key="1">
    <source>
        <dbReference type="HAMAP-Rule" id="MF_01302"/>
    </source>
</evidence>
<evidence type="ECO:0000305" key="2"/>
<organism>
    <name type="scientific">Coprothermobacter proteolyticus (strain ATCC 35245 / DSM 5265 / OCM 4 / BT)</name>
    <dbReference type="NCBI Taxonomy" id="309798"/>
    <lineage>
        <taxon>Bacteria</taxon>
        <taxon>Pseudomonadati</taxon>
        <taxon>Coprothermobacterota</taxon>
        <taxon>Coprothermobacteria</taxon>
        <taxon>Coprothermobacterales</taxon>
        <taxon>Coprothermobacteraceae</taxon>
        <taxon>Coprothermobacter</taxon>
    </lineage>
</organism>
<accession>B5Y974</accession>
<comment type="function">
    <text evidence="1">One of the primary rRNA binding proteins, it binds directly to 16S rRNA central domain where it helps coordinate assembly of the platform of the 30S subunit.</text>
</comment>
<comment type="subunit">
    <text evidence="1">Part of the 30S ribosomal subunit. Contacts proteins S5 and S12.</text>
</comment>
<comment type="similarity">
    <text evidence="1">Belongs to the universal ribosomal protein uS8 family.</text>
</comment>
<gene>
    <name evidence="1" type="primary">rpsH</name>
    <name type="ordered locus">COPRO5265_0999</name>
</gene>
<protein>
    <recommendedName>
        <fullName evidence="1">Small ribosomal subunit protein uS8</fullName>
    </recommendedName>
    <alternativeName>
        <fullName evidence="2">30S ribosomal protein S8</fullName>
    </alternativeName>
</protein>
<proteinExistence type="inferred from homology"/>
<name>RS8_COPPD</name>
<keyword id="KW-1185">Reference proteome</keyword>
<keyword id="KW-0687">Ribonucleoprotein</keyword>
<keyword id="KW-0689">Ribosomal protein</keyword>
<keyword id="KW-0694">RNA-binding</keyword>
<keyword id="KW-0699">rRNA-binding</keyword>
<dbReference type="EMBL" id="CP001145">
    <property type="protein sequence ID" value="ACI16945.1"/>
    <property type="molecule type" value="Genomic_DNA"/>
</dbReference>
<dbReference type="RefSeq" id="WP_012543597.1">
    <property type="nucleotide sequence ID" value="NC_011295.1"/>
</dbReference>
<dbReference type="SMR" id="B5Y974"/>
<dbReference type="STRING" id="309798.COPRO5265_0999"/>
<dbReference type="KEGG" id="cpo:COPRO5265_0999"/>
<dbReference type="eggNOG" id="COG0096">
    <property type="taxonomic scope" value="Bacteria"/>
</dbReference>
<dbReference type="HOGENOM" id="CLU_098428_0_2_9"/>
<dbReference type="OrthoDB" id="9802617at2"/>
<dbReference type="Proteomes" id="UP000001732">
    <property type="component" value="Chromosome"/>
</dbReference>
<dbReference type="GO" id="GO:1990904">
    <property type="term" value="C:ribonucleoprotein complex"/>
    <property type="evidence" value="ECO:0007669"/>
    <property type="project" value="UniProtKB-KW"/>
</dbReference>
<dbReference type="GO" id="GO:0005840">
    <property type="term" value="C:ribosome"/>
    <property type="evidence" value="ECO:0007669"/>
    <property type="project" value="UniProtKB-KW"/>
</dbReference>
<dbReference type="GO" id="GO:0019843">
    <property type="term" value="F:rRNA binding"/>
    <property type="evidence" value="ECO:0007669"/>
    <property type="project" value="UniProtKB-UniRule"/>
</dbReference>
<dbReference type="GO" id="GO:0003735">
    <property type="term" value="F:structural constituent of ribosome"/>
    <property type="evidence" value="ECO:0007669"/>
    <property type="project" value="InterPro"/>
</dbReference>
<dbReference type="GO" id="GO:0006412">
    <property type="term" value="P:translation"/>
    <property type="evidence" value="ECO:0007669"/>
    <property type="project" value="UniProtKB-UniRule"/>
</dbReference>
<dbReference type="FunFam" id="3.30.1490.10:FF:000001">
    <property type="entry name" value="30S ribosomal protein S8"/>
    <property type="match status" value="1"/>
</dbReference>
<dbReference type="Gene3D" id="3.30.1370.30">
    <property type="match status" value="1"/>
</dbReference>
<dbReference type="Gene3D" id="3.30.1490.10">
    <property type="match status" value="1"/>
</dbReference>
<dbReference type="HAMAP" id="MF_01302_B">
    <property type="entry name" value="Ribosomal_uS8_B"/>
    <property type="match status" value="1"/>
</dbReference>
<dbReference type="InterPro" id="IPR000630">
    <property type="entry name" value="Ribosomal_uS8"/>
</dbReference>
<dbReference type="InterPro" id="IPR047863">
    <property type="entry name" value="Ribosomal_uS8_CS"/>
</dbReference>
<dbReference type="InterPro" id="IPR035987">
    <property type="entry name" value="Ribosomal_uS8_sf"/>
</dbReference>
<dbReference type="NCBIfam" id="NF001109">
    <property type="entry name" value="PRK00136.1"/>
    <property type="match status" value="1"/>
</dbReference>
<dbReference type="PANTHER" id="PTHR11758">
    <property type="entry name" value="40S RIBOSOMAL PROTEIN S15A"/>
    <property type="match status" value="1"/>
</dbReference>
<dbReference type="Pfam" id="PF00410">
    <property type="entry name" value="Ribosomal_S8"/>
    <property type="match status" value="1"/>
</dbReference>
<dbReference type="SUPFAM" id="SSF56047">
    <property type="entry name" value="Ribosomal protein S8"/>
    <property type="match status" value="1"/>
</dbReference>
<dbReference type="PROSITE" id="PS00053">
    <property type="entry name" value="RIBOSOMAL_S8"/>
    <property type="match status" value="1"/>
</dbReference>
<sequence>MVQDTISDLFIRLKNASHARLERVEGIPYGKYQEEILKVLVREGYIKGYEIEEKEGKKYLSVQLKFGPGKQPVLNEVRLISVPSRRIYAKKNDIPKVMNGLGIAILTTSAGVLSDAEARQKGVGGQIICYVW</sequence>
<reference key="1">
    <citation type="submission" date="2008-08" db="EMBL/GenBank/DDBJ databases">
        <title>The complete genome sequence of Coprothermobacter proteolyticus strain ATCC 5245 / DSM 5265 / BT.</title>
        <authorList>
            <person name="Dodson R.J."/>
            <person name="Durkin A.S."/>
            <person name="Wu M."/>
            <person name="Eisen J."/>
            <person name="Sutton G."/>
        </authorList>
    </citation>
    <scope>NUCLEOTIDE SEQUENCE [LARGE SCALE GENOMIC DNA]</scope>
    <source>
        <strain>ATCC 35245 / DSM 5265 / OCM 4 / BT</strain>
    </source>
</reference>
<feature type="chain" id="PRO_1000140538" description="Small ribosomal subunit protein uS8">
    <location>
        <begin position="1"/>
        <end position="132"/>
    </location>
</feature>